<comment type="cofactor">
    <cofactor evidence="1">
        <name>Zn(2+)</name>
        <dbReference type="ChEBI" id="CHEBI:29105"/>
    </cofactor>
    <text evidence="1">Binds 1 zinc ion per subunit.</text>
</comment>
<comment type="similarity">
    <text evidence="1">Belongs to the eukaryotic ribosomal protein eL43 family.</text>
</comment>
<gene>
    <name evidence="1" type="primary">rpl37ae</name>
    <name type="ordered locus">Tneu_1379</name>
</gene>
<accession>B1Y976</accession>
<evidence type="ECO:0000255" key="1">
    <source>
        <dbReference type="HAMAP-Rule" id="MF_00327"/>
    </source>
</evidence>
<evidence type="ECO:0000305" key="2"/>
<dbReference type="EMBL" id="CP001014">
    <property type="protein sequence ID" value="ACB40305.1"/>
    <property type="molecule type" value="Genomic_DNA"/>
</dbReference>
<dbReference type="RefSeq" id="WP_012350724.1">
    <property type="nucleotide sequence ID" value="NC_010525.1"/>
</dbReference>
<dbReference type="SMR" id="B1Y976"/>
<dbReference type="STRING" id="444157.Tneu_1379"/>
<dbReference type="GeneID" id="6164551"/>
<dbReference type="KEGG" id="tne:Tneu_1379"/>
<dbReference type="eggNOG" id="arCOG04208">
    <property type="taxonomic scope" value="Archaea"/>
</dbReference>
<dbReference type="HOGENOM" id="CLU_141199_2_0_2"/>
<dbReference type="OrthoDB" id="372011at2157"/>
<dbReference type="Proteomes" id="UP000001694">
    <property type="component" value="Chromosome"/>
</dbReference>
<dbReference type="GO" id="GO:1990904">
    <property type="term" value="C:ribonucleoprotein complex"/>
    <property type="evidence" value="ECO:0007669"/>
    <property type="project" value="UniProtKB-KW"/>
</dbReference>
<dbReference type="GO" id="GO:0005840">
    <property type="term" value="C:ribosome"/>
    <property type="evidence" value="ECO:0007669"/>
    <property type="project" value="UniProtKB-KW"/>
</dbReference>
<dbReference type="GO" id="GO:0070180">
    <property type="term" value="F:large ribosomal subunit rRNA binding"/>
    <property type="evidence" value="ECO:0007669"/>
    <property type="project" value="UniProtKB-UniRule"/>
</dbReference>
<dbReference type="GO" id="GO:0003735">
    <property type="term" value="F:structural constituent of ribosome"/>
    <property type="evidence" value="ECO:0007669"/>
    <property type="project" value="InterPro"/>
</dbReference>
<dbReference type="GO" id="GO:0008270">
    <property type="term" value="F:zinc ion binding"/>
    <property type="evidence" value="ECO:0007669"/>
    <property type="project" value="UniProtKB-UniRule"/>
</dbReference>
<dbReference type="GO" id="GO:0006412">
    <property type="term" value="P:translation"/>
    <property type="evidence" value="ECO:0007669"/>
    <property type="project" value="UniProtKB-UniRule"/>
</dbReference>
<dbReference type="Gene3D" id="2.20.25.30">
    <property type="match status" value="1"/>
</dbReference>
<dbReference type="HAMAP" id="MF_00327">
    <property type="entry name" value="Ribosomal_eL43"/>
    <property type="match status" value="1"/>
</dbReference>
<dbReference type="InterPro" id="IPR011331">
    <property type="entry name" value="Ribosomal_eL37/eL43"/>
</dbReference>
<dbReference type="InterPro" id="IPR002674">
    <property type="entry name" value="Ribosomal_eL43"/>
</dbReference>
<dbReference type="InterPro" id="IPR050522">
    <property type="entry name" value="Ribosomal_protein_eL43"/>
</dbReference>
<dbReference type="InterPro" id="IPR011332">
    <property type="entry name" value="Ribosomal_zn-bd"/>
</dbReference>
<dbReference type="NCBIfam" id="NF003058">
    <property type="entry name" value="PRK03976.1"/>
    <property type="match status" value="1"/>
</dbReference>
<dbReference type="PANTHER" id="PTHR48129">
    <property type="entry name" value="60S RIBOSOMAL PROTEIN L37A"/>
    <property type="match status" value="1"/>
</dbReference>
<dbReference type="PANTHER" id="PTHR48129:SF1">
    <property type="entry name" value="LARGE RIBOSOMAL SUBUNIT PROTEIN EL43"/>
    <property type="match status" value="1"/>
</dbReference>
<dbReference type="Pfam" id="PF01780">
    <property type="entry name" value="Ribosomal_L37ae"/>
    <property type="match status" value="1"/>
</dbReference>
<dbReference type="SUPFAM" id="SSF57829">
    <property type="entry name" value="Zn-binding ribosomal proteins"/>
    <property type="match status" value="1"/>
</dbReference>
<proteinExistence type="inferred from homology"/>
<keyword id="KW-0479">Metal-binding</keyword>
<keyword id="KW-0687">Ribonucleoprotein</keyword>
<keyword id="KW-0689">Ribosomal protein</keyword>
<keyword id="KW-0694">RNA-binding</keyword>
<keyword id="KW-0862">Zinc</keyword>
<keyword id="KW-0863">Zinc-finger</keyword>
<name>RL37A_PYRNV</name>
<feature type="chain" id="PRO_1000116102" description="Large ribosomal subunit protein eL43">
    <location>
        <begin position="1"/>
        <end position="101"/>
    </location>
</feature>
<feature type="zinc finger region" description="C4-type" evidence="1">
    <location>
        <begin position="40"/>
        <end position="62"/>
    </location>
</feature>
<organism>
    <name type="scientific">Pyrobaculum neutrophilum (strain DSM 2338 / JCM 9278 / NBRC 100436 / V24Sta)</name>
    <name type="common">Thermoproteus neutrophilus</name>
    <dbReference type="NCBI Taxonomy" id="444157"/>
    <lineage>
        <taxon>Archaea</taxon>
        <taxon>Thermoproteota</taxon>
        <taxon>Thermoprotei</taxon>
        <taxon>Thermoproteales</taxon>
        <taxon>Thermoproteaceae</taxon>
        <taxon>Pyrobaculum</taxon>
    </lineage>
</organism>
<sequence length="101" mass="11388">MPFSHTKIVGPAGRYGARYGMGIRRKITAIEVKQRGKHRCPSCRSLVRLQRIAFGIWKCPKCGFTFAGGAWTPQTIMGKALAPEELKEVEAQKARWRETAR</sequence>
<reference key="1">
    <citation type="submission" date="2008-03" db="EMBL/GenBank/DDBJ databases">
        <title>Complete sequence of Thermoproteus neutrophilus V24Sta.</title>
        <authorList>
            <consortium name="US DOE Joint Genome Institute"/>
            <person name="Copeland A."/>
            <person name="Lucas S."/>
            <person name="Lapidus A."/>
            <person name="Glavina del Rio T."/>
            <person name="Dalin E."/>
            <person name="Tice H."/>
            <person name="Bruce D."/>
            <person name="Goodwin L."/>
            <person name="Pitluck S."/>
            <person name="Sims D."/>
            <person name="Brettin T."/>
            <person name="Detter J.C."/>
            <person name="Han C."/>
            <person name="Kuske C.R."/>
            <person name="Schmutz J."/>
            <person name="Larimer F."/>
            <person name="Land M."/>
            <person name="Hauser L."/>
            <person name="Kyrpides N."/>
            <person name="Mikhailova N."/>
            <person name="Biddle J.F."/>
            <person name="Zhang Z."/>
            <person name="Fitz-Gibbon S.T."/>
            <person name="Lowe T.M."/>
            <person name="Saltikov C."/>
            <person name="House C.H."/>
            <person name="Richardson P."/>
        </authorList>
    </citation>
    <scope>NUCLEOTIDE SEQUENCE [LARGE SCALE GENOMIC DNA]</scope>
    <source>
        <strain>DSM 2338 / JCM 9278 / NBRC 100436 / V24Sta</strain>
    </source>
</reference>
<protein>
    <recommendedName>
        <fullName evidence="1">Large ribosomal subunit protein eL43</fullName>
    </recommendedName>
    <alternativeName>
        <fullName evidence="2">50S ribosomal protein L37Ae</fullName>
    </alternativeName>
    <alternativeName>
        <fullName evidence="1">Ribosomal protein L43e</fullName>
    </alternativeName>
</protein>